<organism>
    <name type="scientific">Rubrobacter xylanophilus (strain DSM 9941 / JCM 11954 / NBRC 16129 / PRD-1)</name>
    <dbReference type="NCBI Taxonomy" id="266117"/>
    <lineage>
        <taxon>Bacteria</taxon>
        <taxon>Bacillati</taxon>
        <taxon>Actinomycetota</taxon>
        <taxon>Rubrobacteria</taxon>
        <taxon>Rubrobacterales</taxon>
        <taxon>Rubrobacteraceae</taxon>
        <taxon>Rubrobacter</taxon>
    </lineage>
</organism>
<evidence type="ECO:0000255" key="1">
    <source>
        <dbReference type="HAMAP-Rule" id="MF_01026"/>
    </source>
</evidence>
<keyword id="KW-0004">4Fe-4S</keyword>
<keyword id="KW-0028">Amino-acid biosynthesis</keyword>
<keyword id="KW-0100">Branched-chain amino acid biosynthesis</keyword>
<keyword id="KW-0408">Iron</keyword>
<keyword id="KW-0411">Iron-sulfur</keyword>
<keyword id="KW-0432">Leucine biosynthesis</keyword>
<keyword id="KW-0456">Lyase</keyword>
<keyword id="KW-0479">Metal-binding</keyword>
<keyword id="KW-1185">Reference proteome</keyword>
<reference key="1">
    <citation type="submission" date="2006-06" db="EMBL/GenBank/DDBJ databases">
        <title>Complete sequence of Rubrobacter xylanophilus DSM 9941.</title>
        <authorList>
            <consortium name="US DOE Joint Genome Institute"/>
            <person name="Copeland A."/>
            <person name="Lucas S."/>
            <person name="Lapidus A."/>
            <person name="Barry K."/>
            <person name="Detter J.C."/>
            <person name="Glavina del Rio T."/>
            <person name="Hammon N."/>
            <person name="Israni S."/>
            <person name="Dalin E."/>
            <person name="Tice H."/>
            <person name="Pitluck S."/>
            <person name="Munk A.C."/>
            <person name="Brettin T."/>
            <person name="Bruce D."/>
            <person name="Han C."/>
            <person name="Tapia R."/>
            <person name="Gilna P."/>
            <person name="Schmutz J."/>
            <person name="Larimer F."/>
            <person name="Land M."/>
            <person name="Hauser L."/>
            <person name="Kyrpides N."/>
            <person name="Lykidis A."/>
            <person name="da Costa M.S."/>
            <person name="Rainey F.A."/>
            <person name="Empadinhas N."/>
            <person name="Jolivet E."/>
            <person name="Battista J.R."/>
            <person name="Richardson P."/>
        </authorList>
    </citation>
    <scope>NUCLEOTIDE SEQUENCE [LARGE SCALE GENOMIC DNA]</scope>
    <source>
        <strain>DSM 9941 / JCM 11954 / NBRC 16129 / PRD-1</strain>
    </source>
</reference>
<protein>
    <recommendedName>
        <fullName evidence="1">3-isopropylmalate dehydratase large subunit 1</fullName>
        <ecNumber evidence="1">4.2.1.33</ecNumber>
    </recommendedName>
    <alternativeName>
        <fullName evidence="1">Alpha-IPM isomerase 1</fullName>
        <shortName evidence="1">IPMI 1</shortName>
    </alternativeName>
    <alternativeName>
        <fullName evidence="1">Isopropylmalate isomerase 1</fullName>
    </alternativeName>
</protein>
<feature type="chain" id="PRO_0000319836" description="3-isopropylmalate dehydratase large subunit 1">
    <location>
        <begin position="1"/>
        <end position="469"/>
    </location>
</feature>
<feature type="binding site" evidence="1">
    <location>
        <position position="344"/>
    </location>
    <ligand>
        <name>[4Fe-4S] cluster</name>
        <dbReference type="ChEBI" id="CHEBI:49883"/>
    </ligand>
</feature>
<feature type="binding site" evidence="1">
    <location>
        <position position="404"/>
    </location>
    <ligand>
        <name>[4Fe-4S] cluster</name>
        <dbReference type="ChEBI" id="CHEBI:49883"/>
    </ligand>
</feature>
<feature type="binding site" evidence="1">
    <location>
        <position position="407"/>
    </location>
    <ligand>
        <name>[4Fe-4S] cluster</name>
        <dbReference type="ChEBI" id="CHEBI:49883"/>
    </ligand>
</feature>
<accession>Q1AZC4</accession>
<comment type="function">
    <text evidence="1">Catalyzes the isomerization between 2-isopropylmalate and 3-isopropylmalate, via the formation of 2-isopropylmaleate.</text>
</comment>
<comment type="catalytic activity">
    <reaction evidence="1">
        <text>(2R,3S)-3-isopropylmalate = (2S)-2-isopropylmalate</text>
        <dbReference type="Rhea" id="RHEA:32287"/>
        <dbReference type="ChEBI" id="CHEBI:1178"/>
        <dbReference type="ChEBI" id="CHEBI:35121"/>
        <dbReference type="EC" id="4.2.1.33"/>
    </reaction>
</comment>
<comment type="cofactor">
    <cofactor evidence="1">
        <name>[4Fe-4S] cluster</name>
        <dbReference type="ChEBI" id="CHEBI:49883"/>
    </cofactor>
    <text evidence="1">Binds 1 [4Fe-4S] cluster per subunit.</text>
</comment>
<comment type="pathway">
    <text evidence="1">Amino-acid biosynthesis; L-leucine biosynthesis; L-leucine from 3-methyl-2-oxobutanoate: step 2/4.</text>
</comment>
<comment type="subunit">
    <text evidence="1">Heterodimer of LeuC and LeuD.</text>
</comment>
<comment type="similarity">
    <text evidence="1">Belongs to the aconitase/IPM isomerase family. LeuC type 1 subfamily.</text>
</comment>
<sequence>MEKKKPRTLVEKIWERHVVRRAEGEPDLLYVDLHMVHEVTSPQAFEALRLAGRRVRRPDLTVATMDHNVPTTDVRLGVRDRVSARQMEALRKNCEEFGIQLHEWGSPGQGIVHVIGPEMGLTQPGMVIVCGDSHTSTHGAFGALAFGIGTSEVEHVLATQTIPQRRPKTMAITVEGEAPPDVTAKDIMLGILHRIGTGGGVGHAIEYRGEAIRNLSMEGRMTICNMTIEGGGRAGMVAPDEKTYSYIEGRPHAPKGRAWEEALEYWQSLPTDEGATFDKEVVIDAAELVPYVSWGTTPAQTVPLDGEVPEPQNEGHERALRYMGLRPGTPIREIEVDTVFIGSCTNARIEDLRAAARVLEGHKVKEGIRAMVVPGSMRVKKQAEEEGLDEIFKKAGFEWRNAGCSMCLGMNPDILSPGERCASTSNRNFEGRQGKGGRTHLVSPVVAAATAVMGRFASPSELGVPVEVG</sequence>
<gene>
    <name evidence="1" type="primary">leuC1</name>
    <name type="ordered locus">Rxyl_0278</name>
</gene>
<proteinExistence type="inferred from homology"/>
<name>LEUC1_RUBXD</name>
<dbReference type="EC" id="4.2.1.33" evidence="1"/>
<dbReference type="EMBL" id="CP000386">
    <property type="protein sequence ID" value="ABG03254.1"/>
    <property type="molecule type" value="Genomic_DNA"/>
</dbReference>
<dbReference type="RefSeq" id="WP_011563272.1">
    <property type="nucleotide sequence ID" value="NC_008148.1"/>
</dbReference>
<dbReference type="SMR" id="Q1AZC4"/>
<dbReference type="STRING" id="266117.Rxyl_0278"/>
<dbReference type="KEGG" id="rxy:Rxyl_0278"/>
<dbReference type="eggNOG" id="COG0065">
    <property type="taxonomic scope" value="Bacteria"/>
</dbReference>
<dbReference type="HOGENOM" id="CLU_006714_3_4_11"/>
<dbReference type="OrthoDB" id="9802769at2"/>
<dbReference type="PhylomeDB" id="Q1AZC4"/>
<dbReference type="UniPathway" id="UPA00048">
    <property type="reaction ID" value="UER00071"/>
</dbReference>
<dbReference type="Proteomes" id="UP000006637">
    <property type="component" value="Chromosome"/>
</dbReference>
<dbReference type="GO" id="GO:0003861">
    <property type="term" value="F:3-isopropylmalate dehydratase activity"/>
    <property type="evidence" value="ECO:0007669"/>
    <property type="project" value="UniProtKB-UniRule"/>
</dbReference>
<dbReference type="GO" id="GO:0051539">
    <property type="term" value="F:4 iron, 4 sulfur cluster binding"/>
    <property type="evidence" value="ECO:0007669"/>
    <property type="project" value="UniProtKB-KW"/>
</dbReference>
<dbReference type="GO" id="GO:0046872">
    <property type="term" value="F:metal ion binding"/>
    <property type="evidence" value="ECO:0007669"/>
    <property type="project" value="UniProtKB-KW"/>
</dbReference>
<dbReference type="GO" id="GO:0009098">
    <property type="term" value="P:L-leucine biosynthetic process"/>
    <property type="evidence" value="ECO:0007669"/>
    <property type="project" value="UniProtKB-UniRule"/>
</dbReference>
<dbReference type="CDD" id="cd01583">
    <property type="entry name" value="IPMI"/>
    <property type="match status" value="1"/>
</dbReference>
<dbReference type="FunFam" id="3.30.499.10:FF:000007">
    <property type="entry name" value="3-isopropylmalate dehydratase large subunit"/>
    <property type="match status" value="1"/>
</dbReference>
<dbReference type="Gene3D" id="3.30.499.10">
    <property type="entry name" value="Aconitase, domain 3"/>
    <property type="match status" value="2"/>
</dbReference>
<dbReference type="HAMAP" id="MF_01026">
    <property type="entry name" value="LeuC_type1"/>
    <property type="match status" value="1"/>
</dbReference>
<dbReference type="InterPro" id="IPR004430">
    <property type="entry name" value="3-IsopropMal_deHydase_lsu"/>
</dbReference>
<dbReference type="InterPro" id="IPR015931">
    <property type="entry name" value="Acnase/IPM_dHydase_lsu_aba_1/3"/>
</dbReference>
<dbReference type="InterPro" id="IPR001030">
    <property type="entry name" value="Acoase/IPM_deHydtase_lsu_aba"/>
</dbReference>
<dbReference type="InterPro" id="IPR018136">
    <property type="entry name" value="Aconitase_4Fe-4S_BS"/>
</dbReference>
<dbReference type="InterPro" id="IPR036008">
    <property type="entry name" value="Aconitase_4Fe-4S_dom"/>
</dbReference>
<dbReference type="InterPro" id="IPR050067">
    <property type="entry name" value="IPM_dehydratase_rel_enz"/>
</dbReference>
<dbReference type="InterPro" id="IPR033941">
    <property type="entry name" value="IPMI_cat"/>
</dbReference>
<dbReference type="NCBIfam" id="TIGR00170">
    <property type="entry name" value="leuC"/>
    <property type="match status" value="1"/>
</dbReference>
<dbReference type="NCBIfam" id="NF004016">
    <property type="entry name" value="PRK05478.1"/>
    <property type="match status" value="1"/>
</dbReference>
<dbReference type="NCBIfam" id="NF009116">
    <property type="entry name" value="PRK12466.1"/>
    <property type="match status" value="1"/>
</dbReference>
<dbReference type="PANTHER" id="PTHR43822:SF9">
    <property type="entry name" value="3-ISOPROPYLMALATE DEHYDRATASE"/>
    <property type="match status" value="1"/>
</dbReference>
<dbReference type="PANTHER" id="PTHR43822">
    <property type="entry name" value="HOMOACONITASE, MITOCHONDRIAL-RELATED"/>
    <property type="match status" value="1"/>
</dbReference>
<dbReference type="Pfam" id="PF00330">
    <property type="entry name" value="Aconitase"/>
    <property type="match status" value="1"/>
</dbReference>
<dbReference type="PRINTS" id="PR00415">
    <property type="entry name" value="ACONITASE"/>
</dbReference>
<dbReference type="SUPFAM" id="SSF53732">
    <property type="entry name" value="Aconitase iron-sulfur domain"/>
    <property type="match status" value="1"/>
</dbReference>
<dbReference type="PROSITE" id="PS00450">
    <property type="entry name" value="ACONITASE_1"/>
    <property type="match status" value="1"/>
</dbReference>
<dbReference type="PROSITE" id="PS01244">
    <property type="entry name" value="ACONITASE_2"/>
    <property type="match status" value="1"/>
</dbReference>